<sequence length="208" mass="22851">MPTVDVVDLNNQVVSSVELADDVFGAEVNQSLLYEAVRQYQASLRAGTHATKVRREVSGSGKKLWKQKGTGRARIGSVRSPLWRHGATVHGPQPRDYAYKLPKKMLLGALRSALSAKVRDGELKVVQNFNFSDHKTKNAMGALSKLEAGRTVLVVDNEDNRNLELGIRNLKGVTLLATREVNPYHLLGHKSVLISEAAARKFSEALAK</sequence>
<feature type="chain" id="PRO_1000052504" description="Large ribosomal subunit protein uL4">
    <location>
        <begin position="1"/>
        <end position="208"/>
    </location>
</feature>
<evidence type="ECO:0000255" key="1">
    <source>
        <dbReference type="HAMAP-Rule" id="MF_01328"/>
    </source>
</evidence>
<evidence type="ECO:0000305" key="2"/>
<proteinExistence type="inferred from homology"/>
<gene>
    <name evidence="1" type="primary">rplD</name>
    <name type="ordered locus">Acid_5117</name>
</gene>
<name>RL4_SOLUE</name>
<protein>
    <recommendedName>
        <fullName evidence="1">Large ribosomal subunit protein uL4</fullName>
    </recommendedName>
    <alternativeName>
        <fullName evidence="2">50S ribosomal protein L4</fullName>
    </alternativeName>
</protein>
<dbReference type="EMBL" id="CP000473">
    <property type="protein sequence ID" value="ABJ86072.1"/>
    <property type="molecule type" value="Genomic_DNA"/>
</dbReference>
<dbReference type="SMR" id="Q01W93"/>
<dbReference type="FunCoup" id="Q01W93">
    <property type="interactions" value="754"/>
</dbReference>
<dbReference type="STRING" id="234267.Acid_5117"/>
<dbReference type="KEGG" id="sus:Acid_5117"/>
<dbReference type="eggNOG" id="COG0088">
    <property type="taxonomic scope" value="Bacteria"/>
</dbReference>
<dbReference type="HOGENOM" id="CLU_041575_5_2_0"/>
<dbReference type="InParanoid" id="Q01W93"/>
<dbReference type="OrthoDB" id="9803201at2"/>
<dbReference type="GO" id="GO:1990904">
    <property type="term" value="C:ribonucleoprotein complex"/>
    <property type="evidence" value="ECO:0007669"/>
    <property type="project" value="UniProtKB-KW"/>
</dbReference>
<dbReference type="GO" id="GO:0005840">
    <property type="term" value="C:ribosome"/>
    <property type="evidence" value="ECO:0007669"/>
    <property type="project" value="UniProtKB-KW"/>
</dbReference>
<dbReference type="GO" id="GO:0019843">
    <property type="term" value="F:rRNA binding"/>
    <property type="evidence" value="ECO:0007669"/>
    <property type="project" value="UniProtKB-UniRule"/>
</dbReference>
<dbReference type="GO" id="GO:0003735">
    <property type="term" value="F:structural constituent of ribosome"/>
    <property type="evidence" value="ECO:0007669"/>
    <property type="project" value="InterPro"/>
</dbReference>
<dbReference type="GO" id="GO:0006412">
    <property type="term" value="P:translation"/>
    <property type="evidence" value="ECO:0007669"/>
    <property type="project" value="UniProtKB-UniRule"/>
</dbReference>
<dbReference type="Gene3D" id="3.40.1370.10">
    <property type="match status" value="1"/>
</dbReference>
<dbReference type="HAMAP" id="MF_01328_B">
    <property type="entry name" value="Ribosomal_uL4_B"/>
    <property type="match status" value="1"/>
</dbReference>
<dbReference type="InterPro" id="IPR002136">
    <property type="entry name" value="Ribosomal_uL4"/>
</dbReference>
<dbReference type="InterPro" id="IPR013005">
    <property type="entry name" value="Ribosomal_uL4-like"/>
</dbReference>
<dbReference type="InterPro" id="IPR023574">
    <property type="entry name" value="Ribosomal_uL4_dom_sf"/>
</dbReference>
<dbReference type="NCBIfam" id="TIGR03953">
    <property type="entry name" value="rplD_bact"/>
    <property type="match status" value="1"/>
</dbReference>
<dbReference type="PANTHER" id="PTHR10746">
    <property type="entry name" value="50S RIBOSOMAL PROTEIN L4"/>
    <property type="match status" value="1"/>
</dbReference>
<dbReference type="PANTHER" id="PTHR10746:SF6">
    <property type="entry name" value="LARGE RIBOSOMAL SUBUNIT PROTEIN UL4M"/>
    <property type="match status" value="1"/>
</dbReference>
<dbReference type="Pfam" id="PF00573">
    <property type="entry name" value="Ribosomal_L4"/>
    <property type="match status" value="1"/>
</dbReference>
<dbReference type="SUPFAM" id="SSF52166">
    <property type="entry name" value="Ribosomal protein L4"/>
    <property type="match status" value="1"/>
</dbReference>
<comment type="function">
    <text evidence="1">One of the primary rRNA binding proteins, this protein initially binds near the 5'-end of the 23S rRNA. It is important during the early stages of 50S assembly. It makes multiple contacts with different domains of the 23S rRNA in the assembled 50S subunit and ribosome.</text>
</comment>
<comment type="function">
    <text evidence="1">Forms part of the polypeptide exit tunnel.</text>
</comment>
<comment type="subunit">
    <text evidence="1">Part of the 50S ribosomal subunit.</text>
</comment>
<comment type="similarity">
    <text evidence="1">Belongs to the universal ribosomal protein uL4 family.</text>
</comment>
<reference key="1">
    <citation type="journal article" date="2009" name="Appl. Environ. Microbiol.">
        <title>Three genomes from the phylum Acidobacteria provide insight into the lifestyles of these microorganisms in soils.</title>
        <authorList>
            <person name="Ward N.L."/>
            <person name="Challacombe J.F."/>
            <person name="Janssen P.H."/>
            <person name="Henrissat B."/>
            <person name="Coutinho P.M."/>
            <person name="Wu M."/>
            <person name="Xie G."/>
            <person name="Haft D.H."/>
            <person name="Sait M."/>
            <person name="Badger J."/>
            <person name="Barabote R.D."/>
            <person name="Bradley B."/>
            <person name="Brettin T.S."/>
            <person name="Brinkac L.M."/>
            <person name="Bruce D."/>
            <person name="Creasy T."/>
            <person name="Daugherty S.C."/>
            <person name="Davidsen T.M."/>
            <person name="DeBoy R.T."/>
            <person name="Detter J.C."/>
            <person name="Dodson R.J."/>
            <person name="Durkin A.S."/>
            <person name="Ganapathy A."/>
            <person name="Gwinn-Giglio M."/>
            <person name="Han C.S."/>
            <person name="Khouri H."/>
            <person name="Kiss H."/>
            <person name="Kothari S.P."/>
            <person name="Madupu R."/>
            <person name="Nelson K.E."/>
            <person name="Nelson W.C."/>
            <person name="Paulsen I."/>
            <person name="Penn K."/>
            <person name="Ren Q."/>
            <person name="Rosovitz M.J."/>
            <person name="Selengut J.D."/>
            <person name="Shrivastava S."/>
            <person name="Sullivan S.A."/>
            <person name="Tapia R."/>
            <person name="Thompson L.S."/>
            <person name="Watkins K.L."/>
            <person name="Yang Q."/>
            <person name="Yu C."/>
            <person name="Zafar N."/>
            <person name="Zhou L."/>
            <person name="Kuske C.R."/>
        </authorList>
    </citation>
    <scope>NUCLEOTIDE SEQUENCE [LARGE SCALE GENOMIC DNA]</scope>
    <source>
        <strain>Ellin6076</strain>
    </source>
</reference>
<accession>Q01W93</accession>
<keyword id="KW-0687">Ribonucleoprotein</keyword>
<keyword id="KW-0689">Ribosomal protein</keyword>
<keyword id="KW-0694">RNA-binding</keyword>
<keyword id="KW-0699">rRNA-binding</keyword>
<organism>
    <name type="scientific">Solibacter usitatus (strain Ellin6076)</name>
    <dbReference type="NCBI Taxonomy" id="234267"/>
    <lineage>
        <taxon>Bacteria</taxon>
        <taxon>Pseudomonadati</taxon>
        <taxon>Acidobacteriota</taxon>
        <taxon>Terriglobia</taxon>
        <taxon>Bryobacterales</taxon>
        <taxon>Solibacteraceae</taxon>
        <taxon>Candidatus Solibacter</taxon>
    </lineage>
</organism>